<comment type="function">
    <text evidence="1">Catalyzes the 1,3-allylic rearrangement of the homoallylic substrate isopentenyl (IPP) to its highly electrophilic allylic isomer, dimethylallyl diphosphate (DMAPP).</text>
</comment>
<comment type="catalytic activity">
    <reaction evidence="1">
        <text>isopentenyl diphosphate = dimethylallyl diphosphate</text>
        <dbReference type="Rhea" id="RHEA:23284"/>
        <dbReference type="ChEBI" id="CHEBI:57623"/>
        <dbReference type="ChEBI" id="CHEBI:128769"/>
        <dbReference type="EC" id="5.3.3.2"/>
    </reaction>
</comment>
<comment type="cofactor">
    <cofactor evidence="1">
        <name>Mg(2+)</name>
        <dbReference type="ChEBI" id="CHEBI:18420"/>
    </cofactor>
    <text evidence="1">Binds 1 Mg(2+) ion per subunit. The magnesium ion binds only when substrate is bound.</text>
</comment>
<comment type="cofactor">
    <cofactor evidence="1">
        <name>Mn(2+)</name>
        <dbReference type="ChEBI" id="CHEBI:29035"/>
    </cofactor>
    <text evidence="1">Binds 1 Mn(2+) ion per subunit.</text>
</comment>
<comment type="pathway">
    <text evidence="1">Isoprenoid biosynthesis; dimethylallyl diphosphate biosynthesis; dimethylallyl diphosphate from isopentenyl diphosphate: step 1/1.</text>
</comment>
<comment type="subcellular location">
    <subcellularLocation>
        <location evidence="1">Cytoplasm</location>
    </subcellularLocation>
</comment>
<comment type="similarity">
    <text evidence="1">Belongs to the IPP isomerase type 1 family.</text>
</comment>
<feature type="chain" id="PRO_0000205267" description="Isopentenyl-diphosphate Delta-isomerase">
    <location>
        <begin position="1"/>
        <end position="180"/>
    </location>
</feature>
<feature type="domain" description="Nudix hydrolase">
    <location>
        <begin position="26"/>
        <end position="160"/>
    </location>
</feature>
<feature type="active site" evidence="1">
    <location>
        <position position="62"/>
    </location>
</feature>
<feature type="active site" evidence="1">
    <location>
        <position position="110"/>
    </location>
</feature>
<feature type="binding site" evidence="1">
    <location>
        <position position="22"/>
    </location>
    <ligand>
        <name>Mn(2+)</name>
        <dbReference type="ChEBI" id="CHEBI:29035"/>
    </ligand>
</feature>
<feature type="binding site" evidence="1">
    <location>
        <position position="28"/>
    </location>
    <ligand>
        <name>Mn(2+)</name>
        <dbReference type="ChEBI" id="CHEBI:29035"/>
    </ligand>
</feature>
<feature type="binding site" evidence="1">
    <location>
        <position position="62"/>
    </location>
    <ligand>
        <name>Mg(2+)</name>
        <dbReference type="ChEBI" id="CHEBI:18420"/>
    </ligand>
</feature>
<feature type="binding site" evidence="1">
    <location>
        <position position="64"/>
    </location>
    <ligand>
        <name>Mn(2+)</name>
        <dbReference type="ChEBI" id="CHEBI:29035"/>
    </ligand>
</feature>
<feature type="binding site" evidence="1">
    <location>
        <position position="82"/>
    </location>
    <ligand>
        <name>Mg(2+)</name>
        <dbReference type="ChEBI" id="CHEBI:18420"/>
    </ligand>
</feature>
<feature type="binding site" evidence="1">
    <location>
        <position position="108"/>
    </location>
    <ligand>
        <name>Mn(2+)</name>
        <dbReference type="ChEBI" id="CHEBI:29035"/>
    </ligand>
</feature>
<feature type="binding site" evidence="1">
    <location>
        <position position="110"/>
    </location>
    <ligand>
        <name>Mn(2+)</name>
        <dbReference type="ChEBI" id="CHEBI:29035"/>
    </ligand>
</feature>
<accession>Q5LWT6</accession>
<name>IDI_RUEPO</name>
<organism>
    <name type="scientific">Ruegeria pomeroyi (strain ATCC 700808 / DSM 15171 / DSS-3)</name>
    <name type="common">Silicibacter pomeroyi</name>
    <dbReference type="NCBI Taxonomy" id="246200"/>
    <lineage>
        <taxon>Bacteria</taxon>
        <taxon>Pseudomonadati</taxon>
        <taxon>Pseudomonadota</taxon>
        <taxon>Alphaproteobacteria</taxon>
        <taxon>Rhodobacterales</taxon>
        <taxon>Roseobacteraceae</taxon>
        <taxon>Ruegeria</taxon>
    </lineage>
</organism>
<dbReference type="EC" id="5.3.3.2" evidence="1"/>
<dbReference type="EMBL" id="CP000031">
    <property type="protein sequence ID" value="AAV93459.1"/>
    <property type="molecule type" value="Genomic_DNA"/>
</dbReference>
<dbReference type="RefSeq" id="WP_011045902.1">
    <property type="nucleotide sequence ID" value="NC_003911.12"/>
</dbReference>
<dbReference type="SMR" id="Q5LWT6"/>
<dbReference type="STRING" id="246200.SPO0131"/>
<dbReference type="PaxDb" id="246200-SPO0131"/>
<dbReference type="KEGG" id="sil:SPO0131"/>
<dbReference type="eggNOG" id="COG1443">
    <property type="taxonomic scope" value="Bacteria"/>
</dbReference>
<dbReference type="HOGENOM" id="CLU_060552_2_1_5"/>
<dbReference type="OrthoDB" id="9809458at2"/>
<dbReference type="UniPathway" id="UPA00059">
    <property type="reaction ID" value="UER00104"/>
</dbReference>
<dbReference type="Proteomes" id="UP000001023">
    <property type="component" value="Chromosome"/>
</dbReference>
<dbReference type="GO" id="GO:0005737">
    <property type="term" value="C:cytoplasm"/>
    <property type="evidence" value="ECO:0007669"/>
    <property type="project" value="UniProtKB-SubCell"/>
</dbReference>
<dbReference type="GO" id="GO:0004452">
    <property type="term" value="F:isopentenyl-diphosphate delta-isomerase activity"/>
    <property type="evidence" value="ECO:0007669"/>
    <property type="project" value="UniProtKB-UniRule"/>
</dbReference>
<dbReference type="GO" id="GO:0046872">
    <property type="term" value="F:metal ion binding"/>
    <property type="evidence" value="ECO:0007669"/>
    <property type="project" value="UniProtKB-KW"/>
</dbReference>
<dbReference type="GO" id="GO:0050992">
    <property type="term" value="P:dimethylallyl diphosphate biosynthetic process"/>
    <property type="evidence" value="ECO:0007669"/>
    <property type="project" value="UniProtKB-UniRule"/>
</dbReference>
<dbReference type="GO" id="GO:0009240">
    <property type="term" value="P:isopentenyl diphosphate biosynthetic process"/>
    <property type="evidence" value="ECO:0007669"/>
    <property type="project" value="TreeGrafter"/>
</dbReference>
<dbReference type="CDD" id="cd02885">
    <property type="entry name" value="NUDIX_IPP_Isomerase"/>
    <property type="match status" value="1"/>
</dbReference>
<dbReference type="Gene3D" id="3.90.79.10">
    <property type="entry name" value="Nucleoside Triphosphate Pyrophosphohydrolase"/>
    <property type="match status" value="1"/>
</dbReference>
<dbReference type="HAMAP" id="MF_00202">
    <property type="entry name" value="Idi"/>
    <property type="match status" value="1"/>
</dbReference>
<dbReference type="InterPro" id="IPR056375">
    <property type="entry name" value="Idi_bact"/>
</dbReference>
<dbReference type="InterPro" id="IPR011876">
    <property type="entry name" value="IsopentenylPP_isomerase_typ1"/>
</dbReference>
<dbReference type="InterPro" id="IPR015797">
    <property type="entry name" value="NUDIX_hydrolase-like_dom_sf"/>
</dbReference>
<dbReference type="InterPro" id="IPR000086">
    <property type="entry name" value="NUDIX_hydrolase_dom"/>
</dbReference>
<dbReference type="NCBIfam" id="TIGR02150">
    <property type="entry name" value="IPP_isom_1"/>
    <property type="match status" value="1"/>
</dbReference>
<dbReference type="NCBIfam" id="NF002995">
    <property type="entry name" value="PRK03759.1"/>
    <property type="match status" value="1"/>
</dbReference>
<dbReference type="PANTHER" id="PTHR10885">
    <property type="entry name" value="ISOPENTENYL-DIPHOSPHATE DELTA-ISOMERASE"/>
    <property type="match status" value="1"/>
</dbReference>
<dbReference type="PANTHER" id="PTHR10885:SF0">
    <property type="entry name" value="ISOPENTENYL-DIPHOSPHATE DELTA-ISOMERASE"/>
    <property type="match status" value="1"/>
</dbReference>
<dbReference type="Pfam" id="PF00293">
    <property type="entry name" value="NUDIX"/>
    <property type="match status" value="1"/>
</dbReference>
<dbReference type="PIRSF" id="PIRSF018427">
    <property type="entry name" value="Isopntndiph_ism"/>
    <property type="match status" value="1"/>
</dbReference>
<dbReference type="SUPFAM" id="SSF55811">
    <property type="entry name" value="Nudix"/>
    <property type="match status" value="1"/>
</dbReference>
<dbReference type="PROSITE" id="PS51462">
    <property type="entry name" value="NUDIX"/>
    <property type="match status" value="1"/>
</dbReference>
<keyword id="KW-0963">Cytoplasm</keyword>
<keyword id="KW-0413">Isomerase</keyword>
<keyword id="KW-0414">Isoprene biosynthesis</keyword>
<keyword id="KW-0460">Magnesium</keyword>
<keyword id="KW-0464">Manganese</keyword>
<keyword id="KW-0479">Metal-binding</keyword>
<keyword id="KW-1185">Reference proteome</keyword>
<evidence type="ECO:0000255" key="1">
    <source>
        <dbReference type="HAMAP-Rule" id="MF_00202"/>
    </source>
</evidence>
<gene>
    <name evidence="1" type="primary">idi</name>
    <name type="ordered locus">SPO0131</name>
</gene>
<sequence length="180" mass="20680">MGILIPAWVDDRLVPVDKLEAHEKGLKHKAVSVFAVRDMDILIQRRALGKYHTPGLWANTCCTHPDWDESASTCAVRRLREELGITGLYPEYRHRLEYHADVGNGMVENEVVDVFLAHVRGPLQVVPNPDEVMEIRWIGYHDLLAEVQRYPERFTPWLKIYLHHHADTIFGPDLIISAKA</sequence>
<proteinExistence type="inferred from homology"/>
<protein>
    <recommendedName>
        <fullName evidence="1">Isopentenyl-diphosphate Delta-isomerase</fullName>
        <shortName evidence="1">IPP isomerase</shortName>
        <ecNumber evidence="1">5.3.3.2</ecNumber>
    </recommendedName>
    <alternativeName>
        <fullName evidence="1">IPP:DMAPP isomerase</fullName>
    </alternativeName>
    <alternativeName>
        <fullName evidence="1">Isopentenyl pyrophosphate isomerase</fullName>
    </alternativeName>
</protein>
<reference key="1">
    <citation type="journal article" date="2004" name="Nature">
        <title>Genome sequence of Silicibacter pomeroyi reveals adaptations to the marine environment.</title>
        <authorList>
            <person name="Moran M.A."/>
            <person name="Buchan A."/>
            <person name="Gonzalez J.M."/>
            <person name="Heidelberg J.F."/>
            <person name="Whitman W.B."/>
            <person name="Kiene R.P."/>
            <person name="Henriksen J.R."/>
            <person name="King G.M."/>
            <person name="Belas R."/>
            <person name="Fuqua C."/>
            <person name="Brinkac L.M."/>
            <person name="Lewis M."/>
            <person name="Johri S."/>
            <person name="Weaver B."/>
            <person name="Pai G."/>
            <person name="Eisen J.A."/>
            <person name="Rahe E."/>
            <person name="Sheldon W.M."/>
            <person name="Ye W."/>
            <person name="Miller T.R."/>
            <person name="Carlton J."/>
            <person name="Rasko D.A."/>
            <person name="Paulsen I.T."/>
            <person name="Ren Q."/>
            <person name="Daugherty S.C."/>
            <person name="DeBoy R.T."/>
            <person name="Dodson R.J."/>
            <person name="Durkin A.S."/>
            <person name="Madupu R."/>
            <person name="Nelson W.C."/>
            <person name="Sullivan S.A."/>
            <person name="Rosovitz M.J."/>
            <person name="Haft D.H."/>
            <person name="Selengut J."/>
            <person name="Ward N."/>
        </authorList>
    </citation>
    <scope>NUCLEOTIDE SEQUENCE [LARGE SCALE GENOMIC DNA]</scope>
    <source>
        <strain>ATCC 700808 / DSM 15171 / DSS-3</strain>
    </source>
</reference>
<reference key="2">
    <citation type="journal article" date="2014" name="Stand. Genomic Sci.">
        <title>An updated genome annotation for the model marine bacterium Ruegeria pomeroyi DSS-3.</title>
        <authorList>
            <person name="Rivers A.R."/>
            <person name="Smith C.B."/>
            <person name="Moran M.A."/>
        </authorList>
    </citation>
    <scope>GENOME REANNOTATION</scope>
    <source>
        <strain>ATCC 700808 / DSM 15171 / DSS-3</strain>
    </source>
</reference>